<name>YCCT_ECO5E</name>
<sequence>MKTGIVTTLIALCLPVSVFATTLRLSTDVDLLVLDGKKVSSSLLRGADSIELDNGPHQLVFRVEKTIHLSNSEERLYISPPLVVSFNTQLINQVNFRLPRLENEREANHFDAAPRLELLDGDATPIPVKLDILAITSTAKTIDYEVEVERYNKSAKRASLPQFATMMADDSTLLSGVSELDAIPPQSQVLTEQRLKYWFKLADPQTRNTFLQWAEKQPSS</sequence>
<feature type="signal peptide" evidence="1">
    <location>
        <begin position="1"/>
        <end position="20"/>
    </location>
</feature>
<feature type="chain" id="PRO_1000200486" description="UPF0319 protein YccT">
    <location>
        <begin position="21"/>
        <end position="220"/>
    </location>
</feature>
<comment type="similarity">
    <text evidence="1">Belongs to the UPF0319 family.</text>
</comment>
<organism>
    <name type="scientific">Escherichia coli O157:H7 (strain EC4115 / EHEC)</name>
    <dbReference type="NCBI Taxonomy" id="444450"/>
    <lineage>
        <taxon>Bacteria</taxon>
        <taxon>Pseudomonadati</taxon>
        <taxon>Pseudomonadota</taxon>
        <taxon>Gammaproteobacteria</taxon>
        <taxon>Enterobacterales</taxon>
        <taxon>Enterobacteriaceae</taxon>
        <taxon>Escherichia</taxon>
    </lineage>
</organism>
<protein>
    <recommendedName>
        <fullName evidence="1">UPF0319 protein YccT</fullName>
    </recommendedName>
</protein>
<gene>
    <name evidence="1" type="primary">yccT</name>
    <name type="ordered locus">ECH74115_1128</name>
</gene>
<keyword id="KW-0732">Signal</keyword>
<evidence type="ECO:0000255" key="1">
    <source>
        <dbReference type="HAMAP-Rule" id="MF_00789"/>
    </source>
</evidence>
<dbReference type="EMBL" id="CP001164">
    <property type="protein sequence ID" value="ACI37568.1"/>
    <property type="molecule type" value="Genomic_DNA"/>
</dbReference>
<dbReference type="RefSeq" id="WP_000847791.1">
    <property type="nucleotide sequence ID" value="NC_011353.1"/>
</dbReference>
<dbReference type="KEGG" id="ecf:ECH74115_1128"/>
<dbReference type="HOGENOM" id="CLU_073782_2_0_6"/>
<dbReference type="HAMAP" id="MF_00789">
    <property type="entry name" value="UPF0319"/>
    <property type="match status" value="1"/>
</dbReference>
<dbReference type="InterPro" id="IPR018635">
    <property type="entry name" value="UPF0319"/>
</dbReference>
<dbReference type="NCBIfam" id="NF047712">
    <property type="entry name" value="CrliSynInhib"/>
    <property type="match status" value="1"/>
</dbReference>
<dbReference type="NCBIfam" id="NF002967">
    <property type="entry name" value="PRK03641.1"/>
    <property type="match status" value="1"/>
</dbReference>
<dbReference type="PANTHER" id="PTHR38108">
    <property type="entry name" value="UPF0319 PROTEIN YCCT"/>
    <property type="match status" value="1"/>
</dbReference>
<dbReference type="PANTHER" id="PTHR38108:SF1">
    <property type="entry name" value="UPF0319 PROTEIN YCCT"/>
    <property type="match status" value="1"/>
</dbReference>
<dbReference type="Pfam" id="PF09829">
    <property type="entry name" value="DUF2057"/>
    <property type="match status" value="1"/>
</dbReference>
<accession>B5YT94</accession>
<reference key="1">
    <citation type="journal article" date="2011" name="Proc. Natl. Acad. Sci. U.S.A.">
        <title>Genomic anatomy of Escherichia coli O157:H7 outbreaks.</title>
        <authorList>
            <person name="Eppinger M."/>
            <person name="Mammel M.K."/>
            <person name="Leclerc J.E."/>
            <person name="Ravel J."/>
            <person name="Cebula T.A."/>
        </authorList>
    </citation>
    <scope>NUCLEOTIDE SEQUENCE [LARGE SCALE GENOMIC DNA]</scope>
    <source>
        <strain>EC4115 / EHEC</strain>
    </source>
</reference>
<proteinExistence type="inferred from homology"/>